<proteinExistence type="inferred from homology"/>
<accession>A8IAR8</accession>
<organism>
    <name type="scientific">Azorhizobium caulinodans (strain ATCC 43989 / DSM 5975 / JCM 20966 / LMG 6465 / NBRC 14845 / NCIMB 13405 / ORS 571)</name>
    <dbReference type="NCBI Taxonomy" id="438753"/>
    <lineage>
        <taxon>Bacteria</taxon>
        <taxon>Pseudomonadati</taxon>
        <taxon>Pseudomonadota</taxon>
        <taxon>Alphaproteobacteria</taxon>
        <taxon>Hyphomicrobiales</taxon>
        <taxon>Xanthobacteraceae</taxon>
        <taxon>Azorhizobium</taxon>
    </lineage>
</organism>
<reference key="1">
    <citation type="submission" date="2007-04" db="EMBL/GenBank/DDBJ databases">
        <title>Complete genome sequence of the nitrogen-fixing bacterium Azorhizobium caulinodans ORS571.</title>
        <authorList>
            <person name="Lee K.B."/>
            <person name="Backer P.D."/>
            <person name="Aono T."/>
            <person name="Liu C.T."/>
            <person name="Suzuki S."/>
            <person name="Suzuki T."/>
            <person name="Kaneko T."/>
            <person name="Yamada M."/>
            <person name="Tabata S."/>
            <person name="Kupfer D.M."/>
            <person name="Najar F.Z."/>
            <person name="Wiley G.B."/>
            <person name="Roe B."/>
            <person name="Binnewies T."/>
            <person name="Ussery D."/>
            <person name="Vereecke D."/>
            <person name="Gevers D."/>
            <person name="Holsters M."/>
            <person name="Oyaizu H."/>
        </authorList>
    </citation>
    <scope>NUCLEOTIDE SEQUENCE [LARGE SCALE GENOMIC DNA]</scope>
    <source>
        <strain>ATCC 43989 / DSM 5975 / JCM 20966 / LMG 6465 / NBRC 14845 / NCIMB 13405 / ORS 571</strain>
    </source>
</reference>
<evidence type="ECO:0000255" key="1">
    <source>
        <dbReference type="HAMAP-Rule" id="MF_01320"/>
    </source>
</evidence>
<evidence type="ECO:0000256" key="2">
    <source>
        <dbReference type="SAM" id="MobiDB-lite"/>
    </source>
</evidence>
<evidence type="ECO:0000305" key="3"/>
<name>RL2_AZOC5</name>
<feature type="chain" id="PRO_1000073226" description="Large ribosomal subunit protein uL2">
    <location>
        <begin position="1"/>
        <end position="277"/>
    </location>
</feature>
<feature type="region of interest" description="Disordered" evidence="2">
    <location>
        <begin position="223"/>
        <end position="277"/>
    </location>
</feature>
<protein>
    <recommendedName>
        <fullName evidence="1">Large ribosomal subunit protein uL2</fullName>
    </recommendedName>
    <alternativeName>
        <fullName evidence="3">50S ribosomal protein L2</fullName>
    </alternativeName>
</protein>
<keyword id="KW-1185">Reference proteome</keyword>
<keyword id="KW-0687">Ribonucleoprotein</keyword>
<keyword id="KW-0689">Ribosomal protein</keyword>
<keyword id="KW-0694">RNA-binding</keyword>
<keyword id="KW-0699">rRNA-binding</keyword>
<dbReference type="EMBL" id="AP009384">
    <property type="protein sequence ID" value="BAF88549.1"/>
    <property type="molecule type" value="Genomic_DNA"/>
</dbReference>
<dbReference type="RefSeq" id="WP_012171077.1">
    <property type="nucleotide sequence ID" value="NC_009937.1"/>
</dbReference>
<dbReference type="SMR" id="A8IAR8"/>
<dbReference type="STRING" id="438753.AZC_2551"/>
<dbReference type="KEGG" id="azc:AZC_2551"/>
<dbReference type="eggNOG" id="COG0090">
    <property type="taxonomic scope" value="Bacteria"/>
</dbReference>
<dbReference type="HOGENOM" id="CLU_036235_2_1_5"/>
<dbReference type="Proteomes" id="UP000000270">
    <property type="component" value="Chromosome"/>
</dbReference>
<dbReference type="GO" id="GO:0015934">
    <property type="term" value="C:large ribosomal subunit"/>
    <property type="evidence" value="ECO:0007669"/>
    <property type="project" value="InterPro"/>
</dbReference>
<dbReference type="GO" id="GO:0019843">
    <property type="term" value="F:rRNA binding"/>
    <property type="evidence" value="ECO:0007669"/>
    <property type="project" value="UniProtKB-UniRule"/>
</dbReference>
<dbReference type="GO" id="GO:0003735">
    <property type="term" value="F:structural constituent of ribosome"/>
    <property type="evidence" value="ECO:0007669"/>
    <property type="project" value="InterPro"/>
</dbReference>
<dbReference type="GO" id="GO:0016740">
    <property type="term" value="F:transferase activity"/>
    <property type="evidence" value="ECO:0007669"/>
    <property type="project" value="InterPro"/>
</dbReference>
<dbReference type="GO" id="GO:0002181">
    <property type="term" value="P:cytoplasmic translation"/>
    <property type="evidence" value="ECO:0007669"/>
    <property type="project" value="TreeGrafter"/>
</dbReference>
<dbReference type="FunFam" id="2.30.30.30:FF:000055">
    <property type="entry name" value="50S ribosomal protein L2"/>
    <property type="match status" value="1"/>
</dbReference>
<dbReference type="FunFam" id="2.40.50.140:FF:000003">
    <property type="entry name" value="50S ribosomal protein L2"/>
    <property type="match status" value="1"/>
</dbReference>
<dbReference type="FunFam" id="4.10.950.10:FF:000001">
    <property type="entry name" value="50S ribosomal protein L2"/>
    <property type="match status" value="1"/>
</dbReference>
<dbReference type="Gene3D" id="2.30.30.30">
    <property type="match status" value="1"/>
</dbReference>
<dbReference type="Gene3D" id="2.40.50.140">
    <property type="entry name" value="Nucleic acid-binding proteins"/>
    <property type="match status" value="1"/>
</dbReference>
<dbReference type="Gene3D" id="4.10.950.10">
    <property type="entry name" value="Ribosomal protein L2, domain 3"/>
    <property type="match status" value="1"/>
</dbReference>
<dbReference type="HAMAP" id="MF_01320_B">
    <property type="entry name" value="Ribosomal_uL2_B"/>
    <property type="match status" value="1"/>
</dbReference>
<dbReference type="InterPro" id="IPR012340">
    <property type="entry name" value="NA-bd_OB-fold"/>
</dbReference>
<dbReference type="InterPro" id="IPR014722">
    <property type="entry name" value="Rib_uL2_dom2"/>
</dbReference>
<dbReference type="InterPro" id="IPR002171">
    <property type="entry name" value="Ribosomal_uL2"/>
</dbReference>
<dbReference type="InterPro" id="IPR005880">
    <property type="entry name" value="Ribosomal_uL2_bac/org-type"/>
</dbReference>
<dbReference type="InterPro" id="IPR022669">
    <property type="entry name" value="Ribosomal_uL2_C"/>
</dbReference>
<dbReference type="InterPro" id="IPR022671">
    <property type="entry name" value="Ribosomal_uL2_CS"/>
</dbReference>
<dbReference type="InterPro" id="IPR014726">
    <property type="entry name" value="Ribosomal_uL2_dom3"/>
</dbReference>
<dbReference type="InterPro" id="IPR022666">
    <property type="entry name" value="Ribosomal_uL2_RNA-bd_dom"/>
</dbReference>
<dbReference type="InterPro" id="IPR008991">
    <property type="entry name" value="Translation_prot_SH3-like_sf"/>
</dbReference>
<dbReference type="NCBIfam" id="TIGR01171">
    <property type="entry name" value="rplB_bact"/>
    <property type="match status" value="1"/>
</dbReference>
<dbReference type="PANTHER" id="PTHR13691:SF5">
    <property type="entry name" value="LARGE RIBOSOMAL SUBUNIT PROTEIN UL2M"/>
    <property type="match status" value="1"/>
</dbReference>
<dbReference type="PANTHER" id="PTHR13691">
    <property type="entry name" value="RIBOSOMAL PROTEIN L2"/>
    <property type="match status" value="1"/>
</dbReference>
<dbReference type="Pfam" id="PF00181">
    <property type="entry name" value="Ribosomal_L2"/>
    <property type="match status" value="1"/>
</dbReference>
<dbReference type="Pfam" id="PF03947">
    <property type="entry name" value="Ribosomal_L2_C"/>
    <property type="match status" value="1"/>
</dbReference>
<dbReference type="PIRSF" id="PIRSF002158">
    <property type="entry name" value="Ribosomal_L2"/>
    <property type="match status" value="1"/>
</dbReference>
<dbReference type="SMART" id="SM01383">
    <property type="entry name" value="Ribosomal_L2"/>
    <property type="match status" value="1"/>
</dbReference>
<dbReference type="SMART" id="SM01382">
    <property type="entry name" value="Ribosomal_L2_C"/>
    <property type="match status" value="1"/>
</dbReference>
<dbReference type="SUPFAM" id="SSF50249">
    <property type="entry name" value="Nucleic acid-binding proteins"/>
    <property type="match status" value="1"/>
</dbReference>
<dbReference type="SUPFAM" id="SSF50104">
    <property type="entry name" value="Translation proteins SH3-like domain"/>
    <property type="match status" value="1"/>
</dbReference>
<dbReference type="PROSITE" id="PS00467">
    <property type="entry name" value="RIBOSOMAL_L2"/>
    <property type="match status" value="1"/>
</dbReference>
<sequence>MALKHFKPVTPGLRQLVIVDRSGLYKGKPVKTLTEGKSSSGGRNNNGRITVRFRGGGHKQTYRLVDFKRAKRDVSATVERLEYDPNRTAFIALIKYEDGELAYILAPQRLAVGDKVIAGEQVDVKPGNAAPLSNLPVGTIVHNVEMKIGKGGQIARSAGSYAQIVGRDQGYVIVRLNSGEQRLIHGACYATVGAVSNPDHMNTSLGKAGRSRWLGVKPHNRGVTMNPVDHPHGGGEGRTSGGRHPVTPWGKPTKGMKTRSNKATDKFIVTSRHKRKK</sequence>
<gene>
    <name evidence="1" type="primary">rplB</name>
    <name type="ordered locus">AZC_2551</name>
</gene>
<comment type="function">
    <text evidence="1">One of the primary rRNA binding proteins. Required for association of the 30S and 50S subunits to form the 70S ribosome, for tRNA binding and peptide bond formation. It has been suggested to have peptidyltransferase activity; this is somewhat controversial. Makes several contacts with the 16S rRNA in the 70S ribosome.</text>
</comment>
<comment type="subunit">
    <text evidence="1">Part of the 50S ribosomal subunit. Forms a bridge to the 30S subunit in the 70S ribosome.</text>
</comment>
<comment type="similarity">
    <text evidence="1">Belongs to the universal ribosomal protein uL2 family.</text>
</comment>